<sequence>MRASKANAYVAAIDQGTTSTRCIIIDDTGAVVSVAAKEHEQILPQQGWVEHDPVEIWDNVRAVVSQAMVAIDITPYEISSVGVTNQRETTVIWDPATGEPVYNAIVWQDTRTNEICRELAGEEGQQKWLDRTGLLINSYPAGPKIKWILDNVEGVRERAEKGELYFGTMDTWLLWNLTGGIRGDDGEEALHVTDVTNASRTLLMDIHTQQWDPELCEALDIPMSLLPEIKPSIGDYRSVRHRGILADVPITGVLGDQQAALFGQGGFKEGDTKNTYGTGLFLVMNTGPELKISEHGLLSTIAYQIEGQDPVYALEGSVSMGGSLVQWLRDSLQMIPTAPAIEEFARQVPDNGGVHIVPAFSGLFAPRWHPEARGVITGLTRFANRNHICRAVLEATAFQTREVVDAMARDAGKELESLRVDGAMVQNELLMQMQADILGIDVIRPGDIETTALGTAFAAGLGSGFFKDFDQIIELISIRQTWTPEMTEAERERAYDAWNEAVTHAYPR</sequence>
<comment type="function">
    <text evidence="1">Key enzyme in the regulation of glycerol uptake and metabolism. Catalyzes the phosphorylation of glycerol to yield sn-glycerol 3-phosphate.</text>
</comment>
<comment type="catalytic activity">
    <reaction evidence="1">
        <text>glycerol + ATP = sn-glycerol 3-phosphate + ADP + H(+)</text>
        <dbReference type="Rhea" id="RHEA:21644"/>
        <dbReference type="ChEBI" id="CHEBI:15378"/>
        <dbReference type="ChEBI" id="CHEBI:17754"/>
        <dbReference type="ChEBI" id="CHEBI:30616"/>
        <dbReference type="ChEBI" id="CHEBI:57597"/>
        <dbReference type="ChEBI" id="CHEBI:456216"/>
        <dbReference type="EC" id="2.7.1.30"/>
    </reaction>
</comment>
<comment type="activity regulation">
    <text evidence="1">Inhibited by fructose 1,6-bisphosphate (FBP).</text>
</comment>
<comment type="pathway">
    <text evidence="1">Polyol metabolism; glycerol degradation via glycerol kinase pathway; sn-glycerol 3-phosphate from glycerol: step 1/1.</text>
</comment>
<comment type="similarity">
    <text evidence="1">Belongs to the FGGY kinase family.</text>
</comment>
<comment type="sequence caution" evidence="2">
    <conflict type="erroneous initiation">
        <sequence resource="EMBL-CDS" id="BAC19531"/>
    </conflict>
    <text>Extended N-terminus.</text>
</comment>
<feature type="chain" id="PRO_0000059447" description="Glycerol kinase">
    <location>
        <begin position="1"/>
        <end position="508"/>
    </location>
</feature>
<feature type="binding site" evidence="1">
    <location>
        <position position="17"/>
    </location>
    <ligand>
        <name>ADP</name>
        <dbReference type="ChEBI" id="CHEBI:456216"/>
    </ligand>
</feature>
<feature type="binding site" evidence="1">
    <location>
        <position position="17"/>
    </location>
    <ligand>
        <name>ATP</name>
        <dbReference type="ChEBI" id="CHEBI:30616"/>
    </ligand>
</feature>
<feature type="binding site" evidence="1">
    <location>
        <position position="17"/>
    </location>
    <ligand>
        <name>sn-glycerol 3-phosphate</name>
        <dbReference type="ChEBI" id="CHEBI:57597"/>
    </ligand>
</feature>
<feature type="binding site" evidence="1">
    <location>
        <position position="18"/>
    </location>
    <ligand>
        <name>ATP</name>
        <dbReference type="ChEBI" id="CHEBI:30616"/>
    </ligand>
</feature>
<feature type="binding site" evidence="1">
    <location>
        <position position="19"/>
    </location>
    <ligand>
        <name>ATP</name>
        <dbReference type="ChEBI" id="CHEBI:30616"/>
    </ligand>
</feature>
<feature type="binding site" evidence="1">
    <location>
        <position position="21"/>
    </location>
    <ligand>
        <name>ADP</name>
        <dbReference type="ChEBI" id="CHEBI:456216"/>
    </ligand>
</feature>
<feature type="binding site" evidence="1">
    <location>
        <position position="87"/>
    </location>
    <ligand>
        <name>glycerol</name>
        <dbReference type="ChEBI" id="CHEBI:17754"/>
    </ligand>
</feature>
<feature type="binding site" evidence="1">
    <location>
        <position position="87"/>
    </location>
    <ligand>
        <name>sn-glycerol 3-phosphate</name>
        <dbReference type="ChEBI" id="CHEBI:57597"/>
    </ligand>
</feature>
<feature type="binding site" evidence="1">
    <location>
        <position position="88"/>
    </location>
    <ligand>
        <name>glycerol</name>
        <dbReference type="ChEBI" id="CHEBI:17754"/>
    </ligand>
</feature>
<feature type="binding site" evidence="1">
    <location>
        <position position="88"/>
    </location>
    <ligand>
        <name>sn-glycerol 3-phosphate</name>
        <dbReference type="ChEBI" id="CHEBI:57597"/>
    </ligand>
</feature>
<feature type="binding site" evidence="1">
    <location>
        <position position="139"/>
    </location>
    <ligand>
        <name>glycerol</name>
        <dbReference type="ChEBI" id="CHEBI:17754"/>
    </ligand>
</feature>
<feature type="binding site" evidence="1">
    <location>
        <position position="139"/>
    </location>
    <ligand>
        <name>sn-glycerol 3-phosphate</name>
        <dbReference type="ChEBI" id="CHEBI:57597"/>
    </ligand>
</feature>
<feature type="binding site" evidence="1">
    <location>
        <position position="256"/>
    </location>
    <ligand>
        <name>glycerol</name>
        <dbReference type="ChEBI" id="CHEBI:17754"/>
    </ligand>
</feature>
<feature type="binding site" evidence="1">
    <location>
        <position position="256"/>
    </location>
    <ligand>
        <name>sn-glycerol 3-phosphate</name>
        <dbReference type="ChEBI" id="CHEBI:57597"/>
    </ligand>
</feature>
<feature type="binding site" evidence="1">
    <location>
        <position position="257"/>
    </location>
    <ligand>
        <name>glycerol</name>
        <dbReference type="ChEBI" id="CHEBI:17754"/>
    </ligand>
</feature>
<feature type="binding site" evidence="1">
    <location>
        <position position="278"/>
    </location>
    <ligand>
        <name>ADP</name>
        <dbReference type="ChEBI" id="CHEBI:456216"/>
    </ligand>
</feature>
<feature type="binding site" evidence="1">
    <location>
        <position position="278"/>
    </location>
    <ligand>
        <name>ATP</name>
        <dbReference type="ChEBI" id="CHEBI:30616"/>
    </ligand>
</feature>
<feature type="binding site" evidence="1">
    <location>
        <position position="322"/>
    </location>
    <ligand>
        <name>ADP</name>
        <dbReference type="ChEBI" id="CHEBI:456216"/>
    </ligand>
</feature>
<feature type="binding site" evidence="1">
    <location>
        <position position="322"/>
    </location>
    <ligand>
        <name>ATP</name>
        <dbReference type="ChEBI" id="CHEBI:30616"/>
    </ligand>
</feature>
<feature type="binding site" evidence="1">
    <location>
        <position position="326"/>
    </location>
    <ligand>
        <name>ATP</name>
        <dbReference type="ChEBI" id="CHEBI:30616"/>
    </ligand>
</feature>
<feature type="binding site" evidence="1">
    <location>
        <position position="423"/>
    </location>
    <ligand>
        <name>ADP</name>
        <dbReference type="ChEBI" id="CHEBI:456216"/>
    </ligand>
</feature>
<feature type="binding site" evidence="1">
    <location>
        <position position="423"/>
    </location>
    <ligand>
        <name>ATP</name>
        <dbReference type="ChEBI" id="CHEBI:30616"/>
    </ligand>
</feature>
<feature type="binding site" evidence="1">
    <location>
        <position position="427"/>
    </location>
    <ligand>
        <name>ADP</name>
        <dbReference type="ChEBI" id="CHEBI:456216"/>
    </ligand>
</feature>
<protein>
    <recommendedName>
        <fullName evidence="1">Glycerol kinase</fullName>
        <ecNumber evidence="1">2.7.1.30</ecNumber>
    </recommendedName>
    <alternativeName>
        <fullName evidence="1">ATP:glycerol 3-phosphotransferase</fullName>
    </alternativeName>
    <alternativeName>
        <fullName evidence="1">Glycerokinase</fullName>
        <shortName evidence="1">GK</shortName>
    </alternativeName>
</protein>
<gene>
    <name evidence="1" type="primary">glpK</name>
    <name type="ordered locus">CE2721</name>
</gene>
<proteinExistence type="inferred from homology"/>
<accession>Q8FLY8</accession>
<keyword id="KW-0067">ATP-binding</keyword>
<keyword id="KW-0319">Glycerol metabolism</keyword>
<keyword id="KW-0418">Kinase</keyword>
<keyword id="KW-0547">Nucleotide-binding</keyword>
<keyword id="KW-1185">Reference proteome</keyword>
<keyword id="KW-0808">Transferase</keyword>
<name>GLPK_COREF</name>
<evidence type="ECO:0000255" key="1">
    <source>
        <dbReference type="HAMAP-Rule" id="MF_00186"/>
    </source>
</evidence>
<evidence type="ECO:0000305" key="2"/>
<dbReference type="EC" id="2.7.1.30" evidence="1"/>
<dbReference type="EMBL" id="BA000035">
    <property type="protein sequence ID" value="BAC19531.1"/>
    <property type="status" value="ALT_INIT"/>
    <property type="molecule type" value="Genomic_DNA"/>
</dbReference>
<dbReference type="RefSeq" id="WP_035109268.1">
    <property type="nucleotide sequence ID" value="NC_004369.1"/>
</dbReference>
<dbReference type="SMR" id="Q8FLY8"/>
<dbReference type="STRING" id="196164.gene:10743169"/>
<dbReference type="KEGG" id="cef:CE2721"/>
<dbReference type="eggNOG" id="COG0554">
    <property type="taxonomic scope" value="Bacteria"/>
</dbReference>
<dbReference type="HOGENOM" id="CLU_009281_2_3_11"/>
<dbReference type="OrthoDB" id="9805576at2"/>
<dbReference type="UniPathway" id="UPA00618">
    <property type="reaction ID" value="UER00672"/>
</dbReference>
<dbReference type="Proteomes" id="UP000001409">
    <property type="component" value="Chromosome"/>
</dbReference>
<dbReference type="GO" id="GO:0005829">
    <property type="term" value="C:cytosol"/>
    <property type="evidence" value="ECO:0007669"/>
    <property type="project" value="TreeGrafter"/>
</dbReference>
<dbReference type="GO" id="GO:0005524">
    <property type="term" value="F:ATP binding"/>
    <property type="evidence" value="ECO:0007669"/>
    <property type="project" value="UniProtKB-UniRule"/>
</dbReference>
<dbReference type="GO" id="GO:0004370">
    <property type="term" value="F:glycerol kinase activity"/>
    <property type="evidence" value="ECO:0000250"/>
    <property type="project" value="UniProtKB"/>
</dbReference>
<dbReference type="GO" id="GO:0019563">
    <property type="term" value="P:glycerol catabolic process"/>
    <property type="evidence" value="ECO:0007669"/>
    <property type="project" value="UniProtKB-UniRule"/>
</dbReference>
<dbReference type="GO" id="GO:0006071">
    <property type="term" value="P:glycerol metabolic process"/>
    <property type="evidence" value="ECO:0000250"/>
    <property type="project" value="UniProtKB"/>
</dbReference>
<dbReference type="GO" id="GO:0006072">
    <property type="term" value="P:glycerol-3-phosphate metabolic process"/>
    <property type="evidence" value="ECO:0007669"/>
    <property type="project" value="InterPro"/>
</dbReference>
<dbReference type="CDD" id="cd07769">
    <property type="entry name" value="ASKHA_NBD_FGGY_GK"/>
    <property type="match status" value="1"/>
</dbReference>
<dbReference type="FunFam" id="3.30.420.40:FF:000007">
    <property type="entry name" value="Glycerol kinase"/>
    <property type="match status" value="1"/>
</dbReference>
<dbReference type="FunFam" id="3.30.420.40:FF:000008">
    <property type="entry name" value="Glycerol kinase"/>
    <property type="match status" value="1"/>
</dbReference>
<dbReference type="Gene3D" id="3.30.420.40">
    <property type="match status" value="2"/>
</dbReference>
<dbReference type="HAMAP" id="MF_00186">
    <property type="entry name" value="Glycerol_kin"/>
    <property type="match status" value="1"/>
</dbReference>
<dbReference type="InterPro" id="IPR043129">
    <property type="entry name" value="ATPase_NBD"/>
</dbReference>
<dbReference type="InterPro" id="IPR000577">
    <property type="entry name" value="Carb_kinase_FGGY"/>
</dbReference>
<dbReference type="InterPro" id="IPR018483">
    <property type="entry name" value="Carb_kinase_FGGY_CS"/>
</dbReference>
<dbReference type="InterPro" id="IPR018485">
    <property type="entry name" value="FGGY_C"/>
</dbReference>
<dbReference type="InterPro" id="IPR018484">
    <property type="entry name" value="FGGY_N"/>
</dbReference>
<dbReference type="InterPro" id="IPR005999">
    <property type="entry name" value="Glycerol_kin"/>
</dbReference>
<dbReference type="NCBIfam" id="TIGR01311">
    <property type="entry name" value="glycerol_kin"/>
    <property type="match status" value="1"/>
</dbReference>
<dbReference type="NCBIfam" id="NF000756">
    <property type="entry name" value="PRK00047.1"/>
    <property type="match status" value="1"/>
</dbReference>
<dbReference type="PANTHER" id="PTHR10196:SF69">
    <property type="entry name" value="GLYCEROL KINASE"/>
    <property type="match status" value="1"/>
</dbReference>
<dbReference type="PANTHER" id="PTHR10196">
    <property type="entry name" value="SUGAR KINASE"/>
    <property type="match status" value="1"/>
</dbReference>
<dbReference type="Pfam" id="PF02782">
    <property type="entry name" value="FGGY_C"/>
    <property type="match status" value="1"/>
</dbReference>
<dbReference type="Pfam" id="PF00370">
    <property type="entry name" value="FGGY_N"/>
    <property type="match status" value="1"/>
</dbReference>
<dbReference type="PIRSF" id="PIRSF000538">
    <property type="entry name" value="GlpK"/>
    <property type="match status" value="1"/>
</dbReference>
<dbReference type="SUPFAM" id="SSF53067">
    <property type="entry name" value="Actin-like ATPase domain"/>
    <property type="match status" value="2"/>
</dbReference>
<dbReference type="PROSITE" id="PS00445">
    <property type="entry name" value="FGGY_KINASES_2"/>
    <property type="match status" value="1"/>
</dbReference>
<reference key="1">
    <citation type="journal article" date="2003" name="Genome Res.">
        <title>Comparative complete genome sequence analysis of the amino acid replacements responsible for the thermostability of Corynebacterium efficiens.</title>
        <authorList>
            <person name="Nishio Y."/>
            <person name="Nakamura Y."/>
            <person name="Kawarabayasi Y."/>
            <person name="Usuda Y."/>
            <person name="Kimura E."/>
            <person name="Sugimoto S."/>
            <person name="Matsui K."/>
            <person name="Yamagishi A."/>
            <person name="Kikuchi H."/>
            <person name="Ikeo K."/>
            <person name="Gojobori T."/>
        </authorList>
    </citation>
    <scope>NUCLEOTIDE SEQUENCE [LARGE SCALE GENOMIC DNA]</scope>
    <source>
        <strain>DSM 44549 / YS-314 / AJ 12310 / JCM 11189 / NBRC 100395</strain>
    </source>
</reference>
<organism>
    <name type="scientific">Corynebacterium efficiens (strain DSM 44549 / YS-314 / AJ 12310 / JCM 11189 / NBRC 100395)</name>
    <dbReference type="NCBI Taxonomy" id="196164"/>
    <lineage>
        <taxon>Bacteria</taxon>
        <taxon>Bacillati</taxon>
        <taxon>Actinomycetota</taxon>
        <taxon>Actinomycetes</taxon>
        <taxon>Mycobacteriales</taxon>
        <taxon>Corynebacteriaceae</taxon>
        <taxon>Corynebacterium</taxon>
    </lineage>
</organism>